<dbReference type="EC" id="3.1.13.4" evidence="2"/>
<dbReference type="EMBL" id="AB107585">
    <property type="protein sequence ID" value="BAD02263.1"/>
    <property type="molecule type" value="mRNA"/>
</dbReference>
<dbReference type="EMBL" id="AB014610">
    <property type="protein sequence ID" value="BAA31685.2"/>
    <property type="status" value="ALT_INIT"/>
    <property type="molecule type" value="mRNA"/>
</dbReference>
<dbReference type="EMBL" id="BC024043">
    <property type="protein sequence ID" value="AAH24043.1"/>
    <property type="molecule type" value="mRNA"/>
</dbReference>
<dbReference type="EMBL" id="BC094885">
    <property type="protein sequence ID" value="AAH94885.1"/>
    <property type="molecule type" value="mRNA"/>
</dbReference>
<dbReference type="CCDS" id="CCDS44922.1">
    <molecule id="Q504Q3-1"/>
</dbReference>
<dbReference type="CCDS" id="CCDS53802.1">
    <molecule id="Q504Q3-3"/>
</dbReference>
<dbReference type="CCDS" id="CCDS8915.1">
    <molecule id="Q504Q3-2"/>
</dbReference>
<dbReference type="RefSeq" id="NP_001120932.2">
    <molecule id="Q504Q3-1"/>
    <property type="nucleotide sequence ID" value="NM_001127460.4"/>
</dbReference>
<dbReference type="RefSeq" id="NP_001159751.2">
    <molecule id="Q504Q3-3"/>
    <property type="nucleotide sequence ID" value="NM_001166279.3"/>
</dbReference>
<dbReference type="RefSeq" id="NP_001381628.1">
    <molecule id="Q504Q3-1"/>
    <property type="nucleotide sequence ID" value="NM_001394699.1"/>
</dbReference>
<dbReference type="RefSeq" id="NP_001381629.1">
    <molecule id="Q504Q3-2"/>
    <property type="nucleotide sequence ID" value="NM_001394700.1"/>
</dbReference>
<dbReference type="RefSeq" id="NP_055686.3">
    <molecule id="Q504Q3-2"/>
    <property type="nucleotide sequence ID" value="NM_014871.4"/>
</dbReference>
<dbReference type="SMR" id="Q504Q3"/>
<dbReference type="BioGRID" id="115252">
    <property type="interactions" value="400"/>
</dbReference>
<dbReference type="ComplexPortal" id="CPX-2259">
    <property type="entry name" value="PAN2-PAN3 mRNA deadenylation complex"/>
</dbReference>
<dbReference type="CORUM" id="Q504Q3"/>
<dbReference type="DIP" id="DIP-50708N"/>
<dbReference type="FunCoup" id="Q504Q3">
    <property type="interactions" value="1912"/>
</dbReference>
<dbReference type="IntAct" id="Q504Q3">
    <property type="interactions" value="32"/>
</dbReference>
<dbReference type="STRING" id="9606.ENSP00000481859"/>
<dbReference type="MEROPS" id="C19.978"/>
<dbReference type="GlyGen" id="Q504Q3">
    <property type="glycosylation" value="1 site, 1 O-linked glycan (1 site)"/>
</dbReference>
<dbReference type="iPTMnet" id="Q504Q3"/>
<dbReference type="PhosphoSitePlus" id="Q504Q3"/>
<dbReference type="BioMuta" id="PAN2"/>
<dbReference type="DMDM" id="296439280"/>
<dbReference type="jPOST" id="Q504Q3"/>
<dbReference type="MassIVE" id="Q504Q3"/>
<dbReference type="PaxDb" id="9606-ENSP00000401721"/>
<dbReference type="PeptideAtlas" id="Q504Q3"/>
<dbReference type="ProteomicsDB" id="62400">
    <molecule id="Q504Q3-1"/>
</dbReference>
<dbReference type="ProteomicsDB" id="62401">
    <molecule id="Q504Q3-2"/>
</dbReference>
<dbReference type="ProteomicsDB" id="62402">
    <molecule id="Q504Q3-3"/>
</dbReference>
<dbReference type="Pumba" id="Q504Q3"/>
<dbReference type="Antibodypedia" id="28142">
    <property type="antibodies" value="130 antibodies from 25 providers"/>
</dbReference>
<dbReference type="DNASU" id="9924"/>
<dbReference type="Ensembl" id="ENST00000257931.9">
    <molecule id="Q504Q3-3"/>
    <property type="protein sequence ID" value="ENSP00000257931.5"/>
    <property type="gene ID" value="ENSG00000135473.16"/>
</dbReference>
<dbReference type="Ensembl" id="ENST00000425394.7">
    <molecule id="Q504Q3-1"/>
    <property type="protein sequence ID" value="ENSP00000401721.2"/>
    <property type="gene ID" value="ENSG00000135473.16"/>
</dbReference>
<dbReference type="Ensembl" id="ENST00000440411.8">
    <molecule id="Q504Q3-2"/>
    <property type="protein sequence ID" value="ENSP00000388231.3"/>
    <property type="gene ID" value="ENSG00000135473.16"/>
</dbReference>
<dbReference type="Ensembl" id="ENST00000548043.5">
    <molecule id="Q504Q3-1"/>
    <property type="protein sequence ID" value="ENSP00000449861.1"/>
    <property type="gene ID" value="ENSG00000135473.16"/>
</dbReference>
<dbReference type="Ensembl" id="ENST00000610546.4">
    <molecule id="Q504Q3-1"/>
    <property type="protein sequence ID" value="ENSP00000481859.1"/>
    <property type="gene ID" value="ENSG00000135473.16"/>
</dbReference>
<dbReference type="GeneID" id="9924"/>
<dbReference type="KEGG" id="hsa:9924"/>
<dbReference type="MANE-Select" id="ENST00000440411.8">
    <molecule id="Q504Q3-2"/>
    <property type="protein sequence ID" value="ENSP00000388231.3"/>
    <property type="RefSeq nucleotide sequence ID" value="NM_014871.6"/>
    <property type="RefSeq protein sequence ID" value="NP_055686.4"/>
</dbReference>
<dbReference type="UCSC" id="uc001skx.3">
    <molecule id="Q504Q3-1"/>
    <property type="organism name" value="human"/>
</dbReference>
<dbReference type="AGR" id="HGNC:20074"/>
<dbReference type="CTD" id="9924"/>
<dbReference type="DisGeNET" id="9924"/>
<dbReference type="GeneCards" id="PAN2"/>
<dbReference type="HGNC" id="HGNC:20074">
    <property type="gene designation" value="PAN2"/>
</dbReference>
<dbReference type="HPA" id="ENSG00000135473">
    <property type="expression patterns" value="Low tissue specificity"/>
</dbReference>
<dbReference type="MIM" id="617447">
    <property type="type" value="gene"/>
</dbReference>
<dbReference type="neXtProt" id="NX_Q504Q3"/>
<dbReference type="OpenTargets" id="ENSG00000135473"/>
<dbReference type="PharmGKB" id="PA162398664"/>
<dbReference type="VEuPathDB" id="HostDB:ENSG00000135473"/>
<dbReference type="eggNOG" id="KOG1275">
    <property type="taxonomic scope" value="Eukaryota"/>
</dbReference>
<dbReference type="GeneTree" id="ENSGT00390000013978"/>
<dbReference type="HOGENOM" id="CLU_002369_0_0_1"/>
<dbReference type="InParanoid" id="Q504Q3"/>
<dbReference type="OMA" id="TQELLWT"/>
<dbReference type="OrthoDB" id="16516at2759"/>
<dbReference type="PAN-GO" id="Q504Q3">
    <property type="GO annotations" value="3 GO annotations based on evolutionary models"/>
</dbReference>
<dbReference type="PhylomeDB" id="Q504Q3"/>
<dbReference type="TreeFam" id="TF105657"/>
<dbReference type="BRENDA" id="3.1.13.4">
    <property type="organism ID" value="2681"/>
</dbReference>
<dbReference type="PathwayCommons" id="Q504Q3"/>
<dbReference type="Reactome" id="R-HSA-429947">
    <property type="pathway name" value="Deadenylation of mRNA"/>
</dbReference>
<dbReference type="SignaLink" id="Q504Q3"/>
<dbReference type="SIGNOR" id="Q504Q3"/>
<dbReference type="BioGRID-ORCS" id="9924">
    <property type="hits" value="30 hits in 1174 CRISPR screens"/>
</dbReference>
<dbReference type="CD-CODE" id="232F8A39">
    <property type="entry name" value="P-body"/>
</dbReference>
<dbReference type="CD-CODE" id="DEE660B4">
    <property type="entry name" value="Stress granule"/>
</dbReference>
<dbReference type="ChiTaRS" id="PAN2">
    <property type="organism name" value="human"/>
</dbReference>
<dbReference type="GeneWiki" id="USP52"/>
<dbReference type="GenomeRNAi" id="9924"/>
<dbReference type="Pharos" id="Q504Q3">
    <property type="development level" value="Tbio"/>
</dbReference>
<dbReference type="PRO" id="PR:Q504Q3"/>
<dbReference type="Proteomes" id="UP000005640">
    <property type="component" value="Chromosome 12"/>
</dbReference>
<dbReference type="RNAct" id="Q504Q3">
    <property type="molecule type" value="protein"/>
</dbReference>
<dbReference type="Bgee" id="ENSG00000135473">
    <property type="expression patterns" value="Expressed in right lobe of thyroid gland and 197 other cell types or tissues"/>
</dbReference>
<dbReference type="ExpressionAtlas" id="Q504Q3">
    <property type="expression patterns" value="baseline and differential"/>
</dbReference>
<dbReference type="GO" id="GO:0005829">
    <property type="term" value="C:cytosol"/>
    <property type="evidence" value="ECO:0000304"/>
    <property type="project" value="Reactome"/>
</dbReference>
<dbReference type="GO" id="GO:0005634">
    <property type="term" value="C:nucleus"/>
    <property type="evidence" value="ECO:0007669"/>
    <property type="project" value="UniProtKB-SubCell"/>
</dbReference>
<dbReference type="GO" id="GO:0000932">
    <property type="term" value="C:P-body"/>
    <property type="evidence" value="ECO:0000318"/>
    <property type="project" value="GO_Central"/>
</dbReference>
<dbReference type="GO" id="GO:0031251">
    <property type="term" value="C:PAN complex"/>
    <property type="evidence" value="ECO:0000314"/>
    <property type="project" value="UniProtKB"/>
</dbReference>
<dbReference type="GO" id="GO:0000175">
    <property type="term" value="F:3'-5'-RNA exonuclease activity"/>
    <property type="evidence" value="ECO:0000314"/>
    <property type="project" value="UniProtKB"/>
</dbReference>
<dbReference type="GO" id="GO:0046872">
    <property type="term" value="F:metal ion binding"/>
    <property type="evidence" value="ECO:0007669"/>
    <property type="project" value="UniProtKB-KW"/>
</dbReference>
<dbReference type="GO" id="GO:0003676">
    <property type="term" value="F:nucleic acid binding"/>
    <property type="evidence" value="ECO:0007669"/>
    <property type="project" value="InterPro"/>
</dbReference>
<dbReference type="GO" id="GO:0004535">
    <property type="term" value="F:poly(A)-specific ribonuclease activity"/>
    <property type="evidence" value="ECO:0000314"/>
    <property type="project" value="UniProtKB"/>
</dbReference>
<dbReference type="GO" id="GO:0006397">
    <property type="term" value="P:mRNA processing"/>
    <property type="evidence" value="ECO:0007669"/>
    <property type="project" value="UniProtKB-KW"/>
</dbReference>
<dbReference type="GO" id="GO:0000289">
    <property type="term" value="P:nuclear-transcribed mRNA poly(A) tail shortening"/>
    <property type="evidence" value="ECO:0000318"/>
    <property type="project" value="GO_Central"/>
</dbReference>
<dbReference type="GO" id="GO:0010606">
    <property type="term" value="P:positive regulation of cytoplasmic mRNA processing body assembly"/>
    <property type="evidence" value="ECO:0007669"/>
    <property type="project" value="UniProtKB-UniRule"/>
</dbReference>
<dbReference type="CDD" id="cd06143">
    <property type="entry name" value="PAN2_exo"/>
    <property type="match status" value="1"/>
</dbReference>
<dbReference type="CDD" id="cd02672">
    <property type="entry name" value="Peptidase_C19P"/>
    <property type="match status" value="1"/>
</dbReference>
<dbReference type="FunFam" id="2.130.10.10:FF:000059">
    <property type="entry name" value="PAN2-PAN3 deadenylation complex catalytic subunit PAN2"/>
    <property type="match status" value="1"/>
</dbReference>
<dbReference type="FunFam" id="3.30.420.10:FF:000011">
    <property type="entry name" value="PAN2-PAN3 deadenylation complex catalytic subunit PAN2"/>
    <property type="match status" value="1"/>
</dbReference>
<dbReference type="FunFam" id="3.90.70.10:FF:000017">
    <property type="entry name" value="PAN2-PAN3 deadenylation complex catalytic subunit PAN2"/>
    <property type="match status" value="1"/>
</dbReference>
<dbReference type="Gene3D" id="3.90.70.10">
    <property type="entry name" value="Cysteine proteinases"/>
    <property type="match status" value="1"/>
</dbReference>
<dbReference type="Gene3D" id="3.30.420.10">
    <property type="entry name" value="Ribonuclease H-like superfamily/Ribonuclease H"/>
    <property type="match status" value="1"/>
</dbReference>
<dbReference type="Gene3D" id="2.130.10.10">
    <property type="entry name" value="YVTN repeat-like/Quinoprotein amine dehydrogenase"/>
    <property type="match status" value="1"/>
</dbReference>
<dbReference type="HAMAP" id="MF_03182">
    <property type="entry name" value="PAN2"/>
    <property type="match status" value="1"/>
</dbReference>
<dbReference type="InterPro" id="IPR013520">
    <property type="entry name" value="Exonuclease_RNaseT/DNA_pol3"/>
</dbReference>
<dbReference type="InterPro" id="IPR030843">
    <property type="entry name" value="PAN2"/>
</dbReference>
<dbReference type="InterPro" id="IPR050785">
    <property type="entry name" value="PAN2-PAN3_catalytic_subunit"/>
</dbReference>
<dbReference type="InterPro" id="IPR048841">
    <property type="entry name" value="PAN2_N"/>
</dbReference>
<dbReference type="InterPro" id="IPR028881">
    <property type="entry name" value="PAN2_UCH_dom"/>
</dbReference>
<dbReference type="InterPro" id="IPR038765">
    <property type="entry name" value="Papain-like_cys_pep_sf"/>
</dbReference>
<dbReference type="InterPro" id="IPR012337">
    <property type="entry name" value="RNaseH-like_sf"/>
</dbReference>
<dbReference type="InterPro" id="IPR036397">
    <property type="entry name" value="RNaseH_sf"/>
</dbReference>
<dbReference type="InterPro" id="IPR028889">
    <property type="entry name" value="USP_dom"/>
</dbReference>
<dbReference type="InterPro" id="IPR015943">
    <property type="entry name" value="WD40/YVTN_repeat-like_dom_sf"/>
</dbReference>
<dbReference type="InterPro" id="IPR036322">
    <property type="entry name" value="WD40_repeat_dom_sf"/>
</dbReference>
<dbReference type="PANTHER" id="PTHR15728">
    <property type="entry name" value="DEADENYLATION COMPLEX CATALYTIC SUBUNIT PAN2"/>
    <property type="match status" value="1"/>
</dbReference>
<dbReference type="PANTHER" id="PTHR15728:SF0">
    <property type="entry name" value="PAN2-PAN3 DEADENYLATION COMPLEX CATALYTIC SUBUNIT PAN2"/>
    <property type="match status" value="1"/>
</dbReference>
<dbReference type="Pfam" id="PF20770">
    <property type="entry name" value="PAN2_N"/>
    <property type="match status" value="1"/>
</dbReference>
<dbReference type="Pfam" id="PF00929">
    <property type="entry name" value="RNase_T"/>
    <property type="match status" value="1"/>
</dbReference>
<dbReference type="Pfam" id="PF13423">
    <property type="entry name" value="UCH_1"/>
    <property type="match status" value="1"/>
</dbReference>
<dbReference type="SMART" id="SM00479">
    <property type="entry name" value="EXOIII"/>
    <property type="match status" value="1"/>
</dbReference>
<dbReference type="SUPFAM" id="SSF54001">
    <property type="entry name" value="Cysteine proteinases"/>
    <property type="match status" value="1"/>
</dbReference>
<dbReference type="SUPFAM" id="SSF53098">
    <property type="entry name" value="Ribonuclease H-like"/>
    <property type="match status" value="1"/>
</dbReference>
<dbReference type="SUPFAM" id="SSF50978">
    <property type="entry name" value="WD40 repeat-like"/>
    <property type="match status" value="1"/>
</dbReference>
<dbReference type="PROSITE" id="PS50235">
    <property type="entry name" value="USP_3"/>
    <property type="match status" value="1"/>
</dbReference>
<gene>
    <name evidence="2" type="primary">PAN2</name>
    <name type="synonym">KIAA0710</name>
    <name type="synonym">USP52</name>
</gene>
<sequence length="1202" mass="135368">MNFEGLDPGLAEYAPAMHSALDPVLDAHLNPSLLQNVELDPEGVALEALPVQESVHIMEGVYSELHSVVAEVGVPVSVSHFDLHEEMLWVGSHGGHATSFFGPALERYSSFQVNGSDDIRQIQSLENGILFLTKNNLKYMARGGLIIFDYLLDENEDMHSLLLTDSSTLLVGGLQNHIIEIDLNTVQETQKYAVETPGVTIMRQTNRFFFCGHTSGKVSLRDLRTFKVEHEFDAFSGSLSDFDVHGNLLAACGFSSRLTGLACDRFLKVYDLRMMRAITPLQVHVDPAFLRFIPTYTSRLAIISQSGQCQFCEPTGLANPADIFHVNPVGPLLMTFDVSASKQALAFGDSEGCVHLWTDSPEPSFNPYSRETEFALPCLVDSLPPLDWSQDLLPLSLIPVPLTTDTLLSDWPAANSAPAPRRAPPVDAEILRTMKKVGFIGYAPNPRTRLRNQIPYRLKESDSEFDSFSQVTESPVGREEEPHLHMVSKKYRKVTIKYSKLGLEDFDFKHYNKTLFAGLEPHIPNAYCNCMIQVLYFLEPVRCLIQNHLCQKEFCLACELGFLFHMLDLSRGDPCQGNNFLRAFRTIPEASALGLILADSDEASGKGNLARLIQRWNRFILTQLHQDMQELEIPQAYRGAGGSSFCSSGDSVIGQLFSCEMENCSLCRCGSETVRASSTLLFTLSYPDGSKSDKTGKNYDFAQVLKRSICLDQNTQAWCDTCEKYQPTIQTRNIRHLPDILVINCEVNSSKEADFWRMQAEVAFKMAVKKHGGEISKNKEFALADWKELGSPEGVLVCPSIEELKNVWLPFSIRMKMTKNKGLDVCNWTDGDEMQWGPARAEEEHGVYVYDLMATVVHILDSRTGGSLVAHIKVGETYHQRKEGVTHQQWYLFNDFLIEPIDKHEAVQFDMNWKVPAILYYVKRNLNSRYNLNIKNPIEASVLLAEASLARKQRKTHTTFIPLMLNEMPQIGDLVGLDAEFVTLNEEEAELRSDGTKSTIKPSQMSVARITCVRGQGPNEGIPFIDDYISTQEQVVDYLTQYSGIKPGDLDAKISSKHLTTLKSTYLKLRFLIDIGVKFVGHGLQKDFRVINLMVPKDQVLDTVYLFHMPRKRMISLRFLAWYFLDLKIQGETHDSIEDARTALQLYRKYLELSKNGTEPESFHKVLKGLYEKGRKMDWKVPEPEGQTSPKNAAVFSSVLAL</sequence>
<organism>
    <name type="scientific">Homo sapiens</name>
    <name type="common">Human</name>
    <dbReference type="NCBI Taxonomy" id="9606"/>
    <lineage>
        <taxon>Eukaryota</taxon>
        <taxon>Metazoa</taxon>
        <taxon>Chordata</taxon>
        <taxon>Craniata</taxon>
        <taxon>Vertebrata</taxon>
        <taxon>Euteleostomi</taxon>
        <taxon>Mammalia</taxon>
        <taxon>Eutheria</taxon>
        <taxon>Euarchontoglires</taxon>
        <taxon>Primates</taxon>
        <taxon>Haplorrhini</taxon>
        <taxon>Catarrhini</taxon>
        <taxon>Hominidae</taxon>
        <taxon>Homo</taxon>
    </lineage>
</organism>
<accession>Q504Q3</accession>
<accession>O75189</accession>
<accession>Q76E12</accession>
<accession>Q8IVE1</accession>
<comment type="function">
    <text evidence="2 3 5 8">Catalytic subunit of the poly(A)-nuclease (PAN) deadenylation complex, one of two cytoplasmic mRNA deadenylases involved in general and miRNA-mediated mRNA turnover. PAN specifically shortens poly(A) tails of RNA and the activity is stimulated by poly(A)-binding protein (PABP). PAN deadenylation is followed by rapid degradation of the shortened mRNA tails by the CCR4-NOT complex. Deadenylated mRNAs are then degraded by two alternative mechanisms, namely exosome-mediated 3'-5' exonucleolytic degradation, or deadenylation-dependent mRNA decaping and subsequent 5'-3' exonucleolytic degradation by XRN1. Also acts as an important regulator of the HIF1A-mediated hypoxic response. Required for HIF1A mRNA stability independent of poly(A) tail length regulation.</text>
</comment>
<comment type="catalytic activity">
    <reaction evidence="2 3">
        <text>Exonucleolytic cleavage of poly(A) to 5'-AMP.</text>
        <dbReference type="EC" id="3.1.13.4"/>
    </reaction>
</comment>
<comment type="cofactor">
    <cofactor evidence="2">
        <name>a divalent metal cation</name>
        <dbReference type="ChEBI" id="CHEBI:60240"/>
    </cofactor>
    <text evidence="2">Binds 2 metal cations per subunit in the catalytic exonuclease domain.</text>
</comment>
<comment type="activity regulation">
    <text evidence="2">Positively regulated by the regulatory subunit PAN3.</text>
</comment>
<comment type="subunit">
    <text evidence="2 3 9 10">Forms a heterotrimer with an asymmetric homodimer of the regulatory subunit PAN3 to form the poly(A)-nuclease (PAN) deadenylation complex (PubMed:14583602, PubMed:23932717). Interacts with PAN3 isoform 1/Pan3L and isoform 3/Pan3S (PubMed:28559491). Interacts with ZFP36 (By similarity).</text>
</comment>
<comment type="interaction">
    <interactant intactId="EBI-1058976">
        <id>Q504Q3</id>
    </interactant>
    <interactant intactId="EBI-2513054">
        <id>Q58A45</id>
        <label>PAN3</label>
    </interactant>
    <organismsDiffer>false</organismsDiffer>
    <experiments>7</experiments>
</comment>
<comment type="interaction">
    <interactant intactId="EBI-1058976">
        <id>Q504Q3</id>
    </interactant>
    <interactant intactId="EBI-52312184">
        <id>Q9HCJ0-1</id>
        <label>TNRC6C</label>
    </interactant>
    <organismsDiffer>false</organismsDiffer>
    <experiments>5</experiments>
</comment>
<comment type="subcellular location">
    <subcellularLocation>
        <location evidence="3 5">Cytoplasm</location>
    </subcellularLocation>
    <subcellularLocation>
        <location evidence="2 7 8">Cytoplasm</location>
        <location evidence="2 7 8">P-body</location>
    </subcellularLocation>
    <subcellularLocation>
        <location evidence="2 5">Nucleus</location>
    </subcellularLocation>
    <text evidence="2 5">Shuttles between nucleus and cytoplasm.</text>
</comment>
<comment type="alternative products">
    <event type="alternative splicing"/>
    <isoform>
        <id>Q504Q3-1</id>
        <name>1</name>
        <sequence type="displayed"/>
    </isoform>
    <isoform>
        <id>Q504Q3-2</id>
        <name>2</name>
        <sequence type="described" ref="VSP_023749"/>
    </isoform>
    <isoform>
        <id>Q504Q3-3</id>
        <name>3</name>
        <sequence type="described" ref="VSP_023748"/>
    </isoform>
</comment>
<comment type="domain">
    <text evidence="2">Contains a pseudo-UCH domain. This ubiquitin C-terminal hydrolase (UCH)-like or ubiquitin specific protease (USP)-like domain is predicted to be catalytically inactive because it lacks the active site catalytic triad characteristic of thiol proteases, with residues at the equivalent structural positions that are incompatible with catalysis, and it cannot bind ubiquitin. It functions as a structural scaffold for intra- and intermolecular interactions in the complex.</text>
</comment>
<comment type="domain">
    <text evidence="2">The linker, or PAN3 interaction domain (PID), between the WD40 repeats and the pseudo-UCH domain mediates interaction with PAN3.</text>
</comment>
<comment type="similarity">
    <text evidence="2">Belongs to the peptidase C19 family. PAN2 subfamily.</text>
</comment>
<comment type="sequence caution" evidence="15">
    <conflict type="erroneous initiation">
        <sequence resource="EMBL-CDS" id="BAA31685"/>
    </conflict>
    <text>Extended N-terminus.</text>
</comment>
<name>PAN2_HUMAN</name>
<keyword id="KW-0025">Alternative splicing</keyword>
<keyword id="KW-0963">Cytoplasm</keyword>
<keyword id="KW-0269">Exonuclease</keyword>
<keyword id="KW-0378">Hydrolase</keyword>
<keyword id="KW-0479">Metal-binding</keyword>
<keyword id="KW-0507">mRNA processing</keyword>
<keyword id="KW-0540">Nuclease</keyword>
<keyword id="KW-0539">Nucleus</keyword>
<keyword id="KW-0597">Phosphoprotein</keyword>
<keyword id="KW-1267">Proteomics identification</keyword>
<keyword id="KW-1185">Reference proteome</keyword>
<keyword id="KW-0677">Repeat</keyword>
<keyword id="KW-0853">WD repeat</keyword>
<evidence type="ECO:0000250" key="1">
    <source>
        <dbReference type="UniProtKB" id="O95453"/>
    </source>
</evidence>
<evidence type="ECO:0000255" key="2">
    <source>
        <dbReference type="HAMAP-Rule" id="MF_03182"/>
    </source>
</evidence>
<evidence type="ECO:0000269" key="3">
    <source>
    </source>
</evidence>
<evidence type="ECO:0000269" key="4">
    <source>
    </source>
</evidence>
<evidence type="ECO:0000269" key="5">
    <source>
    </source>
</evidence>
<evidence type="ECO:0000269" key="6">
    <source>
    </source>
</evidence>
<evidence type="ECO:0000269" key="7">
    <source>
    </source>
</evidence>
<evidence type="ECO:0000269" key="8">
    <source>
    </source>
</evidence>
<evidence type="ECO:0000269" key="9">
    <source>
    </source>
</evidence>
<evidence type="ECO:0000269" key="10">
    <source>
    </source>
</evidence>
<evidence type="ECO:0000269" key="11">
    <source>
    </source>
</evidence>
<evidence type="ECO:0000303" key="12">
    <source>
    </source>
</evidence>
<evidence type="ECO:0000303" key="13">
    <source>
    </source>
</evidence>
<evidence type="ECO:0000303" key="14">
    <source>
    </source>
</evidence>
<evidence type="ECO:0000305" key="15"/>
<evidence type="ECO:0007744" key="16">
    <source>
    </source>
</evidence>
<evidence type="ECO:0007744" key="17">
    <source>
    </source>
</evidence>
<evidence type="ECO:0007744" key="18">
    <source>
    </source>
</evidence>
<protein>
    <recommendedName>
        <fullName evidence="2">PAN2-PAN3 deadenylation complex catalytic subunit PAN2</fullName>
        <ecNumber evidence="2">3.1.13.4</ecNumber>
    </recommendedName>
    <alternativeName>
        <fullName evidence="2">Inactive ubiquitin carboxyl-terminal hydrolase 52</fullName>
    </alternativeName>
    <alternativeName>
        <fullName evidence="2">PAB1P-dependent poly(A)-specific ribonuclease</fullName>
    </alternativeName>
    <alternativeName>
        <fullName evidence="2">Poly(A)-nuclease deadenylation complex subunit 2</fullName>
        <shortName evidence="2">PAN deadenylation complex subunit 2</shortName>
    </alternativeName>
</protein>
<reference key="1">
    <citation type="journal article" date="2004" name="J. Biol. Chem.">
        <title>Identification of a human cytoplasmic poly(A) nuclease complex stimulated by poly(A)-binding protein.</title>
        <authorList>
            <person name="Uchida N."/>
            <person name="Hoshino S."/>
            <person name="Katada T."/>
        </authorList>
    </citation>
    <scope>NUCLEOTIDE SEQUENCE [MRNA] (ISOFORM 2)</scope>
    <scope>FUNCTION</scope>
    <scope>CATALYTIC ACTIVITY</scope>
    <scope>SUBCELLULAR LOCATION</scope>
    <scope>INTERACTION WITH PAN3 AND POLYADENYLATE-BINDING PROTEIN</scope>
    <scope>MUTAGENESIS OF ASP-1087</scope>
    <scope>VARIANT LEU-179</scope>
    <source>
        <tissue>Cervix carcinoma</tissue>
    </source>
</reference>
<reference key="2">
    <citation type="journal article" date="1998" name="DNA Res.">
        <title>Prediction of the coding sequences of unidentified human genes. X. The complete sequences of 100 new cDNA clones from brain which can code for large proteins in vitro.</title>
        <authorList>
            <person name="Ishikawa K."/>
            <person name="Nagase T."/>
            <person name="Suyama M."/>
            <person name="Miyajima N."/>
            <person name="Tanaka A."/>
            <person name="Kotani H."/>
            <person name="Nomura N."/>
            <person name="Ohara O."/>
        </authorList>
    </citation>
    <scope>NUCLEOTIDE SEQUENCE [LARGE SCALE MRNA] (ISOFORM 3)</scope>
    <scope>VARIANT LEU-179</scope>
    <source>
        <tissue>Brain</tissue>
    </source>
</reference>
<reference key="3">
    <citation type="submission" date="2004-01" db="EMBL/GenBank/DDBJ databases">
        <authorList>
            <person name="Ohara O."/>
            <person name="Suyama M."/>
            <person name="Nagase T."/>
            <person name="Ishikawa K."/>
        </authorList>
    </citation>
    <scope>SEQUENCE REVISION</scope>
</reference>
<reference key="4">
    <citation type="journal article" date="2004" name="Genome Res.">
        <title>The status, quality, and expansion of the NIH full-length cDNA project: the Mammalian Gene Collection (MGC).</title>
        <authorList>
            <consortium name="The MGC Project Team"/>
        </authorList>
    </citation>
    <scope>NUCLEOTIDE SEQUENCE [LARGE SCALE MRNA] (ISOFORMS 1 AND 2)</scope>
    <scope>VARIANTS ASN-32 AND LEU-179</scope>
    <source>
        <tissue>Eye</tissue>
        <tissue>Testis</tissue>
    </source>
</reference>
<reference key="5">
    <citation type="journal article" date="2004" name="Biochem. Biophys. Res. Commun.">
        <title>Cloning and enzymatic analysis of 22 novel human ubiquitin-specific proteases.</title>
        <authorList>
            <person name="Quesada V."/>
            <person name="Diaz-Perales A."/>
            <person name="Gutierrez-Fernandez A."/>
            <person name="Garabaya C."/>
            <person name="Cal S."/>
            <person name="Lopez-Otin C."/>
        </authorList>
    </citation>
    <scope>LACK OF UBIQUITIN CARBOXYL TERMINAL HYDROLASE ACTIVITY</scope>
</reference>
<reference key="6">
    <citation type="journal article" date="2005" name="Nat. Struct. Mol. Biol.">
        <title>Concerted action of poly(A) nucleases and decapping enzyme in mammalian mRNA turnover.</title>
        <authorList>
            <person name="Yamashita A."/>
            <person name="Chang T.-C."/>
            <person name="Yamashita Y."/>
            <person name="Zhu W."/>
            <person name="Zhong Z."/>
            <person name="Chen C.-Y.A."/>
            <person name="Shyu A.-B."/>
        </authorList>
    </citation>
    <scope>FUNCTION</scope>
    <scope>SUBCELLULAR LOCATION</scope>
</reference>
<reference key="7">
    <citation type="journal article" date="2006" name="Nat. Biotechnol.">
        <title>A probability-based approach for high-throughput protein phosphorylation analysis and site localization.</title>
        <authorList>
            <person name="Beausoleil S.A."/>
            <person name="Villen J."/>
            <person name="Gerber S.A."/>
            <person name="Rush J."/>
            <person name="Gygi S.P."/>
        </authorList>
    </citation>
    <scope>PHOSPHORYLATION [LARGE SCALE ANALYSIS] AT SER-1189</scope>
    <scope>IDENTIFICATION BY MASS SPECTROMETRY [LARGE SCALE ANALYSIS]</scope>
    <source>
        <tissue>Cervix carcinoma</tissue>
    </source>
</reference>
<reference key="8">
    <citation type="journal article" date="2008" name="J. Cell Biol.">
        <title>Deadenylation is prerequisite for P-body formation and mRNA decay in mammalian cells.</title>
        <authorList>
            <person name="Zheng D."/>
            <person name="Ezzeddine N."/>
            <person name="Chen C.Y."/>
            <person name="Zhu W."/>
            <person name="He X."/>
            <person name="Shyu A.B."/>
        </authorList>
    </citation>
    <scope>SUBCELLULAR LOCATION</scope>
</reference>
<reference key="9">
    <citation type="journal article" date="2008" name="Proc. Natl. Acad. Sci. U.S.A.">
        <title>A quantitative atlas of mitotic phosphorylation.</title>
        <authorList>
            <person name="Dephoure N."/>
            <person name="Zhou C."/>
            <person name="Villen J."/>
            <person name="Beausoleil S.A."/>
            <person name="Bakalarski C.E."/>
            <person name="Elledge S.J."/>
            <person name="Gygi S.P."/>
        </authorList>
    </citation>
    <scope>PHOSPHORYLATION [LARGE SCALE ANALYSIS] AT SER-791</scope>
    <scope>IDENTIFICATION BY MASS SPECTROMETRY [LARGE SCALE ANALYSIS]</scope>
    <source>
        <tissue>Cervix carcinoma</tissue>
    </source>
</reference>
<reference key="10">
    <citation type="journal article" date="2009" name="Anal. Chem.">
        <title>Lys-N and trypsin cover complementary parts of the phosphoproteome in a refined SCX-based approach.</title>
        <authorList>
            <person name="Gauci S."/>
            <person name="Helbig A.O."/>
            <person name="Slijper M."/>
            <person name="Krijgsveld J."/>
            <person name="Heck A.J."/>
            <person name="Mohammed S."/>
        </authorList>
    </citation>
    <scope>IDENTIFICATION BY MASS SPECTROMETRY [LARGE SCALE ANALYSIS]</scope>
</reference>
<reference key="11">
    <citation type="journal article" date="2011" name="BMC Syst. Biol.">
        <title>Initial characterization of the human central proteome.</title>
        <authorList>
            <person name="Burkard T.R."/>
            <person name="Planyavsky M."/>
            <person name="Kaupe I."/>
            <person name="Breitwieser F.P."/>
            <person name="Buerckstuemmer T."/>
            <person name="Bennett K.L."/>
            <person name="Superti-Furga G."/>
            <person name="Colinge J."/>
        </authorList>
    </citation>
    <scope>IDENTIFICATION BY MASS SPECTROMETRY [LARGE SCALE ANALYSIS]</scope>
</reference>
<reference key="12">
    <citation type="journal article" date="2013" name="Biochem. J.">
        <title>The P-body component USP52/PAN2 is a novel regulator of HIF1A mRNA stability.</title>
        <authorList>
            <person name="Bett J.S."/>
            <person name="Ibrahim A.F."/>
            <person name="Garg A.K."/>
            <person name="Kelly V."/>
            <person name="Pedrioli P."/>
            <person name="Rocha S."/>
            <person name="Hay R.T."/>
        </authorList>
    </citation>
    <scope>FUNCTION</scope>
    <scope>SUBCELLULAR LOCATION</scope>
</reference>
<reference key="13">
    <citation type="journal article" date="2013" name="J. Proteome Res.">
        <title>Toward a comprehensive characterization of a human cancer cell phosphoproteome.</title>
        <authorList>
            <person name="Zhou H."/>
            <person name="Di Palma S."/>
            <person name="Preisinger C."/>
            <person name="Peng M."/>
            <person name="Polat A.N."/>
            <person name="Heck A.J."/>
            <person name="Mohammed S."/>
        </authorList>
    </citation>
    <scope>PHOSPHORYLATION [LARGE SCALE ANALYSIS] AT SER-1189</scope>
    <scope>IDENTIFICATION BY MASS SPECTROMETRY [LARGE SCALE ANALYSIS]</scope>
    <source>
        <tissue>Erythroleukemia</tissue>
    </source>
</reference>
<reference key="14">
    <citation type="journal article" date="2013" name="Mol. Cell">
        <title>Structure of the PAN3 pseudokinase reveals the basis for interactions with the PAN2 deadenylase and the GW182 proteins.</title>
        <authorList>
            <person name="Christie M."/>
            <person name="Boland A."/>
            <person name="Huntzinger E."/>
            <person name="Weichenrieder O."/>
            <person name="Izaurralde E."/>
        </authorList>
    </citation>
    <scope>INTERACTION WITH PAN3</scope>
</reference>
<reference key="15">
    <citation type="journal article" date="2017" name="RNA">
        <title>Antagonistic actions of two human Pan3 isoforms on global mRNA turnover.</title>
        <authorList>
            <person name="Chen C.A."/>
            <person name="Zhang Y."/>
            <person name="Xiang Y."/>
            <person name="Han L."/>
            <person name="Chang J.T."/>
            <person name="Shyu A.B."/>
        </authorList>
    </citation>
    <scope>INTERACTION WITH PAN3</scope>
</reference>
<reference key="16">
    <citation type="journal article" date="2006" name="Science">
        <title>The consensus coding sequences of human breast and colorectal cancers.</title>
        <authorList>
            <person name="Sjoeblom T."/>
            <person name="Jones S."/>
            <person name="Wood L.D."/>
            <person name="Parsons D.W."/>
            <person name="Lin J."/>
            <person name="Barber T.D."/>
            <person name="Mandelker D."/>
            <person name="Leary R.J."/>
            <person name="Ptak J."/>
            <person name="Silliman N."/>
            <person name="Szabo S."/>
            <person name="Buckhaults P."/>
            <person name="Farrell C."/>
            <person name="Meeh P."/>
            <person name="Markowitz S.D."/>
            <person name="Willis J."/>
            <person name="Dawson D."/>
            <person name="Willson J.K.V."/>
            <person name="Gazdar A.F."/>
            <person name="Hartigan J."/>
            <person name="Wu L."/>
            <person name="Liu C."/>
            <person name="Parmigiani G."/>
            <person name="Park B.H."/>
            <person name="Bachman K.E."/>
            <person name="Papadopoulos N."/>
            <person name="Vogelstein B."/>
            <person name="Kinzler K.W."/>
            <person name="Velculescu V.E."/>
        </authorList>
    </citation>
    <scope>VARIANT [LARGE SCALE ANALYSIS] VAL-1201</scope>
</reference>
<feature type="chain" id="PRO_0000280521" description="PAN2-PAN3 deadenylation complex catalytic subunit PAN2">
    <location>
        <begin position="1"/>
        <end position="1202"/>
    </location>
</feature>
<feature type="repeat" description="WD 1" evidence="2">
    <location>
        <begin position="153"/>
        <end position="193"/>
    </location>
</feature>
<feature type="repeat" description="WD 2" evidence="2">
    <location>
        <begin position="195"/>
        <end position="231"/>
    </location>
</feature>
<feature type="repeat" description="WD 3" evidence="2">
    <location>
        <begin position="244"/>
        <end position="280"/>
    </location>
</feature>
<feature type="repeat" description="WD 4" evidence="2">
    <location>
        <begin position="328"/>
        <end position="367"/>
    </location>
</feature>
<feature type="domain" description="USP" evidence="2">
    <location>
        <begin position="486"/>
        <end position="924"/>
    </location>
</feature>
<feature type="domain" description="Exonuclease" evidence="2">
    <location>
        <begin position="975"/>
        <end position="1147"/>
    </location>
</feature>
<feature type="region of interest" description="Linker" evidence="2">
    <location>
        <begin position="368"/>
        <end position="485"/>
    </location>
</feature>
<feature type="binding site" evidence="1 2">
    <location>
        <position position="978"/>
    </location>
    <ligand>
        <name>a divalent metal cation</name>
        <dbReference type="ChEBI" id="CHEBI:60240"/>
        <note>catalytic</note>
    </ligand>
</feature>
<feature type="binding site" evidence="1 2">
    <location>
        <position position="980"/>
    </location>
    <ligand>
        <name>a divalent metal cation</name>
        <dbReference type="ChEBI" id="CHEBI:60240"/>
        <note>catalytic</note>
    </ligand>
</feature>
<feature type="binding site" evidence="1 2">
    <location>
        <position position="1087"/>
    </location>
    <ligand>
        <name>a divalent metal cation</name>
        <dbReference type="ChEBI" id="CHEBI:60240"/>
        <note>catalytic</note>
    </ligand>
</feature>
<feature type="binding site" evidence="1 2">
    <location>
        <position position="1139"/>
    </location>
    <ligand>
        <name>a divalent metal cation</name>
        <dbReference type="ChEBI" id="CHEBI:60240"/>
        <note>catalytic</note>
    </ligand>
</feature>
<feature type="modified residue" description="Phosphoserine" evidence="17">
    <location>
        <position position="791"/>
    </location>
</feature>
<feature type="modified residue" description="Phosphoserine" evidence="16 18">
    <location>
        <position position="1189"/>
    </location>
</feature>
<feature type="splice variant" id="VSP_023748" description="In isoform 3." evidence="14">
    <location>
        <position position="643"/>
    </location>
</feature>
<feature type="splice variant" id="VSP_023749" description="In isoform 2." evidence="12 13">
    <location>
        <begin position="689"/>
        <end position="692"/>
    </location>
</feature>
<feature type="sequence variant" id="VAR_031162" description="In dbSNP:rs11558139." evidence="4">
    <original>S</original>
    <variation>N</variation>
    <location>
        <position position="32"/>
    </location>
</feature>
<feature type="sequence variant" id="VAR_031163" description="In dbSNP:rs1918496." evidence="3 4 11">
    <original>I</original>
    <variation>L</variation>
    <location>
        <position position="179"/>
    </location>
</feature>
<feature type="sequence variant" id="VAR_036359" description="In a colorectal cancer sample; somatic mutation; dbSNP:rs1330054285." evidence="6">
    <original>A</original>
    <variation>V</variation>
    <location>
        <position position="1201"/>
    </location>
</feature>
<feature type="mutagenesis site" description="Loss of exonuclease activity." evidence="3">
    <original>D</original>
    <variation>A</variation>
    <location>
        <position position="1087"/>
    </location>
</feature>
<feature type="sequence conflict" description="In Ref. 4; AAH94885." evidence="15" ref="4">
    <original>G</original>
    <variation>E</variation>
    <location>
        <position position="9"/>
    </location>
</feature>
<feature type="sequence conflict" description="In Ref. 4; AAH94885." evidence="15" ref="4">
    <original>I</original>
    <variation>V</variation>
    <location>
        <position position="1091"/>
    </location>
</feature>
<proteinExistence type="evidence at protein level"/>